<sequence>MASLIQVRDLLALRGRMEAAQISQTLNTPQPMINAMLQQLESMGKAVRIQEEPDGCLSGSCKSCPEGKACLREWWALR</sequence>
<accession>C4ZUR5</accession>
<organism>
    <name type="scientific">Escherichia coli (strain K12 / MC4100 / BW2952)</name>
    <dbReference type="NCBI Taxonomy" id="595496"/>
    <lineage>
        <taxon>Bacteria</taxon>
        <taxon>Pseudomonadati</taxon>
        <taxon>Pseudomonadota</taxon>
        <taxon>Gammaproteobacteria</taxon>
        <taxon>Enterobacterales</taxon>
        <taxon>Enterobacteriaceae</taxon>
        <taxon>Escherichia</taxon>
    </lineage>
</organism>
<protein>
    <recommendedName>
        <fullName evidence="1">Probable [Fe-S]-dependent transcriptional repressor</fullName>
    </recommendedName>
</protein>
<comment type="function">
    <text evidence="1">May function as a transcriptional regulator that controls feoABC expression.</text>
</comment>
<comment type="similarity">
    <text evidence="1">Belongs to the FeoC family.</text>
</comment>
<gene>
    <name evidence="1" type="primary">feoC</name>
    <name type="ordered locus">BWG_3101</name>
</gene>
<feature type="chain" id="PRO_1000215631" description="Probable [Fe-S]-dependent transcriptional repressor">
    <location>
        <begin position="1"/>
        <end position="78"/>
    </location>
</feature>
<feature type="binding site" evidence="1">
    <location>
        <position position="56"/>
    </location>
    <ligand>
        <name>iron-sulfur cluster</name>
        <dbReference type="ChEBI" id="CHEBI:30408"/>
    </ligand>
</feature>
<feature type="binding site" evidence="1">
    <location>
        <position position="61"/>
    </location>
    <ligand>
        <name>iron-sulfur cluster</name>
        <dbReference type="ChEBI" id="CHEBI:30408"/>
    </ligand>
</feature>
<feature type="binding site" evidence="1">
    <location>
        <position position="64"/>
    </location>
    <ligand>
        <name>iron-sulfur cluster</name>
        <dbReference type="ChEBI" id="CHEBI:30408"/>
    </ligand>
</feature>
<feature type="binding site" evidence="1">
    <location>
        <position position="70"/>
    </location>
    <ligand>
        <name>iron-sulfur cluster</name>
        <dbReference type="ChEBI" id="CHEBI:30408"/>
    </ligand>
</feature>
<evidence type="ECO:0000255" key="1">
    <source>
        <dbReference type="HAMAP-Rule" id="MF_01586"/>
    </source>
</evidence>
<keyword id="KW-0238">DNA-binding</keyword>
<keyword id="KW-0408">Iron</keyword>
<keyword id="KW-0411">Iron-sulfur</keyword>
<keyword id="KW-0479">Metal-binding</keyword>
<keyword id="KW-0678">Repressor</keyword>
<keyword id="KW-0804">Transcription</keyword>
<keyword id="KW-0805">Transcription regulation</keyword>
<dbReference type="EMBL" id="CP001396">
    <property type="protein sequence ID" value="ACR64318.1"/>
    <property type="molecule type" value="Genomic_DNA"/>
</dbReference>
<dbReference type="RefSeq" id="WP_000157586.1">
    <property type="nucleotide sequence ID" value="NC_012759.1"/>
</dbReference>
<dbReference type="SMR" id="C4ZUR5"/>
<dbReference type="GeneID" id="86948257"/>
<dbReference type="KEGG" id="ebw:BWG_3101"/>
<dbReference type="HOGENOM" id="CLU_189182_0_0_6"/>
<dbReference type="GO" id="GO:0003677">
    <property type="term" value="F:DNA binding"/>
    <property type="evidence" value="ECO:0007669"/>
    <property type="project" value="UniProtKB-KW"/>
</dbReference>
<dbReference type="GO" id="GO:0005506">
    <property type="term" value="F:iron ion binding"/>
    <property type="evidence" value="ECO:0007669"/>
    <property type="project" value="UniProtKB-UniRule"/>
</dbReference>
<dbReference type="GO" id="GO:0051536">
    <property type="term" value="F:iron-sulfur cluster binding"/>
    <property type="evidence" value="ECO:0007669"/>
    <property type="project" value="UniProtKB-KW"/>
</dbReference>
<dbReference type="Gene3D" id="1.10.10.10">
    <property type="entry name" value="Winged helix-like DNA-binding domain superfamily/Winged helix DNA-binding domain"/>
    <property type="match status" value="1"/>
</dbReference>
<dbReference type="HAMAP" id="MF_01586">
    <property type="entry name" value="FeoC"/>
    <property type="match status" value="1"/>
</dbReference>
<dbReference type="InterPro" id="IPR023732">
    <property type="entry name" value="FeoC"/>
</dbReference>
<dbReference type="InterPro" id="IPR015102">
    <property type="entry name" value="Tscrpt_reg_HTH_FeoC"/>
</dbReference>
<dbReference type="InterPro" id="IPR036388">
    <property type="entry name" value="WH-like_DNA-bd_sf"/>
</dbReference>
<dbReference type="InterPro" id="IPR036390">
    <property type="entry name" value="WH_DNA-bd_sf"/>
</dbReference>
<dbReference type="NCBIfam" id="NF011960">
    <property type="entry name" value="PRK15431.1"/>
    <property type="match status" value="1"/>
</dbReference>
<dbReference type="Pfam" id="PF09012">
    <property type="entry name" value="FeoC"/>
    <property type="match status" value="1"/>
</dbReference>
<dbReference type="SUPFAM" id="SSF46785">
    <property type="entry name" value="Winged helix' DNA-binding domain"/>
    <property type="match status" value="1"/>
</dbReference>
<name>FEOC_ECOBW</name>
<proteinExistence type="inferred from homology"/>
<reference key="1">
    <citation type="journal article" date="2009" name="J. Bacteriol.">
        <title>Genomic sequencing reveals regulatory mutations and recombinational events in the widely used MC4100 lineage of Escherichia coli K-12.</title>
        <authorList>
            <person name="Ferenci T."/>
            <person name="Zhou Z."/>
            <person name="Betteridge T."/>
            <person name="Ren Y."/>
            <person name="Liu Y."/>
            <person name="Feng L."/>
            <person name="Reeves P.R."/>
            <person name="Wang L."/>
        </authorList>
    </citation>
    <scope>NUCLEOTIDE SEQUENCE [LARGE SCALE GENOMIC DNA]</scope>
    <source>
        <strain>K12 / MC4100 / BW2952</strain>
    </source>
</reference>